<organism>
    <name type="scientific">Canis lupus familiaris</name>
    <name type="common">Dog</name>
    <name type="synonym">Canis familiaris</name>
    <dbReference type="NCBI Taxonomy" id="9615"/>
    <lineage>
        <taxon>Eukaryota</taxon>
        <taxon>Metazoa</taxon>
        <taxon>Chordata</taxon>
        <taxon>Craniata</taxon>
        <taxon>Vertebrata</taxon>
        <taxon>Euteleostomi</taxon>
        <taxon>Mammalia</taxon>
        <taxon>Eutheria</taxon>
        <taxon>Laurasiatheria</taxon>
        <taxon>Carnivora</taxon>
        <taxon>Caniformia</taxon>
        <taxon>Canidae</taxon>
        <taxon>Canis</taxon>
    </lineage>
</organism>
<evidence type="ECO:0000250" key="1">
    <source>
        <dbReference type="UniProtKB" id="O14493"/>
    </source>
</evidence>
<evidence type="ECO:0000250" key="2">
    <source>
        <dbReference type="UniProtKB" id="O35054"/>
    </source>
</evidence>
<evidence type="ECO:0000255" key="3"/>
<evidence type="ECO:0000269" key="4">
    <source>
    </source>
</evidence>
<evidence type="ECO:0000305" key="5"/>
<evidence type="ECO:0000305" key="6">
    <source>
    </source>
</evidence>
<name>CLD4_CANLF</name>
<accession>A0A8C0N7E5</accession>
<accession>A0A8P0NEI2</accession>
<gene>
    <name type="primary">CLDN4</name>
</gene>
<comment type="function">
    <text evidence="1 2">Can associate with other claudins to regulate tight junction structural and functional strand dynamics (By similarity). May coassemble with CLDN8 into tight junction strands containing anion-selective channels that convey paracellular chloride permeability in renal collecting ducts (By similarity). May integrate into CLDN3 strands to modulate localized tight junction barrier properties. May disrupt strand assembly of channel-forming CLDN2 and CLDN15 and inhibit cation conductance. Cannot form tight junction strands on its own (By similarity).</text>
</comment>
<comment type="catalytic activity">
    <reaction evidence="2">
        <text>chloride(in) = chloride(out)</text>
        <dbReference type="Rhea" id="RHEA:29823"/>
        <dbReference type="ChEBI" id="CHEBI:17996"/>
    </reaction>
</comment>
<comment type="catalytic activity">
    <reaction evidence="2">
        <text>bromide(in) = bromide(out)</text>
        <dbReference type="Rhea" id="RHEA:75383"/>
        <dbReference type="ChEBI" id="CHEBI:15858"/>
    </reaction>
</comment>
<comment type="catalytic activity">
    <reaction evidence="2">
        <text>iodide(out) = iodide(in)</text>
        <dbReference type="Rhea" id="RHEA:66324"/>
        <dbReference type="ChEBI" id="CHEBI:16382"/>
    </reaction>
</comment>
<comment type="catalytic activity">
    <reaction evidence="2">
        <text>fluoride(in) = fluoride(out)</text>
        <dbReference type="Rhea" id="RHEA:76159"/>
        <dbReference type="ChEBI" id="CHEBI:17051"/>
    </reaction>
</comment>
<comment type="subunit">
    <text evidence="1 2">Can form heteropolymeric strands with other claudins (By similarity). Interacts with CLDN8 (By similarity). Interacts with CLDN1. Directly interacts with TJP1/ZO-1 (By similarity). Interacts with TJP2/ZO-2 and TJP3/ZO-3 (By similarity). Interacts with EPHA2; phosphorylates CLDN4 and may regulate tight junctions (By similarity).</text>
</comment>
<comment type="subcellular location">
    <subcellularLocation>
        <location evidence="4">Cell junction</location>
        <location evidence="4">Tight junction</location>
    </subcellularLocation>
    <subcellularLocation>
        <location evidence="4">Cell membrane</location>
        <topology evidence="3">Multi-pass membrane protein</topology>
    </subcellularLocation>
</comment>
<comment type="PTM">
    <text evidence="1">Phosphorylated. Phosphorylation by EPHA2 is stimulated by EFNA1 and alters interaction with TJP1.</text>
</comment>
<comment type="similarity">
    <text evidence="5">Belongs to the claudin family.</text>
</comment>
<comment type="caution">
    <text evidence="6">The intrinsic role of CLDN4 is debated. A function as an inter-claudin regulator has recently been postulated and may well explain both channel-forming and barrier properties inferred by knockout studies.</text>
</comment>
<sequence length="210" mass="22091">MASMGLQVMGIALAVLGWLGAILSCALPMWRVTAFIGSNIVTSQTIWEGLWMNCVVQSTGQMQCKVYDSLLALPQDLQAARALMVVSIILAALGVLLSVVGGKCTNCVEDESAKAKTMIVAGVVFLLAGLLVMVPASWTANNIIRDFYNPLVVSGQKREMGASLYVGWAASGLLLLGGALLCCNCPPRADKPYSAKYSAAARSAPASNYV</sequence>
<reference key="1">
    <citation type="journal article" date="2005" name="Nature">
        <title>Genome sequence, comparative analysis and haplotype structure of the domestic dog.</title>
        <authorList>
            <person name="Lindblad-Toh K."/>
            <person name="Wade C.M."/>
            <person name="Mikkelsen T.S."/>
            <person name="Karlsson E.K."/>
            <person name="Jaffe D.B."/>
            <person name="Kamal M."/>
            <person name="Clamp M."/>
            <person name="Chang J.L."/>
            <person name="Kulbokas E.J. III"/>
            <person name="Zody M.C."/>
            <person name="Mauceli E."/>
            <person name="Xie X."/>
            <person name="Breen M."/>
            <person name="Wayne R.K."/>
            <person name="Ostrander E.A."/>
            <person name="Ponting C.P."/>
            <person name="Galibert F."/>
            <person name="Smith D.R."/>
            <person name="deJong P.J."/>
            <person name="Kirkness E.F."/>
            <person name="Alvarez P."/>
            <person name="Biagi T."/>
            <person name="Brockman W."/>
            <person name="Butler J."/>
            <person name="Chin C.-W."/>
            <person name="Cook A."/>
            <person name="Cuff J."/>
            <person name="Daly M.J."/>
            <person name="DeCaprio D."/>
            <person name="Gnerre S."/>
            <person name="Grabherr M."/>
            <person name="Kellis M."/>
            <person name="Kleber M."/>
            <person name="Bardeleben C."/>
            <person name="Goodstadt L."/>
            <person name="Heger A."/>
            <person name="Hitte C."/>
            <person name="Kim L."/>
            <person name="Koepfli K.-P."/>
            <person name="Parker H.G."/>
            <person name="Pollinger J.P."/>
            <person name="Searle S.M.J."/>
            <person name="Sutter N.B."/>
            <person name="Thomas R."/>
            <person name="Webber C."/>
            <person name="Baldwin J."/>
            <person name="Abebe A."/>
            <person name="Abouelleil A."/>
            <person name="Aftuck L."/>
            <person name="Ait-Zahra M."/>
            <person name="Aldredge T."/>
            <person name="Allen N."/>
            <person name="An P."/>
            <person name="Anderson S."/>
            <person name="Antoine C."/>
            <person name="Arachchi H."/>
            <person name="Aslam A."/>
            <person name="Ayotte L."/>
            <person name="Bachantsang P."/>
            <person name="Barry A."/>
            <person name="Bayul T."/>
            <person name="Benamara M."/>
            <person name="Berlin A."/>
            <person name="Bessette D."/>
            <person name="Blitshteyn B."/>
            <person name="Bloom T."/>
            <person name="Blye J."/>
            <person name="Boguslavskiy L."/>
            <person name="Bonnet C."/>
            <person name="Boukhgalter B."/>
            <person name="Brown A."/>
            <person name="Cahill P."/>
            <person name="Calixte N."/>
            <person name="Camarata J."/>
            <person name="Cheshatsang Y."/>
            <person name="Chu J."/>
            <person name="Citroen M."/>
            <person name="Collymore A."/>
            <person name="Cooke P."/>
            <person name="Dawoe T."/>
            <person name="Daza R."/>
            <person name="Decktor K."/>
            <person name="DeGray S."/>
            <person name="Dhargay N."/>
            <person name="Dooley K."/>
            <person name="Dooley K."/>
            <person name="Dorje P."/>
            <person name="Dorjee K."/>
            <person name="Dorris L."/>
            <person name="Duffey N."/>
            <person name="Dupes A."/>
            <person name="Egbiremolen O."/>
            <person name="Elong R."/>
            <person name="Falk J."/>
            <person name="Farina A."/>
            <person name="Faro S."/>
            <person name="Ferguson D."/>
            <person name="Ferreira P."/>
            <person name="Fisher S."/>
            <person name="FitzGerald M."/>
            <person name="Foley K."/>
            <person name="Foley C."/>
            <person name="Franke A."/>
            <person name="Friedrich D."/>
            <person name="Gage D."/>
            <person name="Garber M."/>
            <person name="Gearin G."/>
            <person name="Giannoukos G."/>
            <person name="Goode T."/>
            <person name="Goyette A."/>
            <person name="Graham J."/>
            <person name="Grandbois E."/>
            <person name="Gyaltsen K."/>
            <person name="Hafez N."/>
            <person name="Hagopian D."/>
            <person name="Hagos B."/>
            <person name="Hall J."/>
            <person name="Healy C."/>
            <person name="Hegarty R."/>
            <person name="Honan T."/>
            <person name="Horn A."/>
            <person name="Houde N."/>
            <person name="Hughes L."/>
            <person name="Hunnicutt L."/>
            <person name="Husby M."/>
            <person name="Jester B."/>
            <person name="Jones C."/>
            <person name="Kamat A."/>
            <person name="Kanga B."/>
            <person name="Kells C."/>
            <person name="Khazanovich D."/>
            <person name="Kieu A.C."/>
            <person name="Kisner P."/>
            <person name="Kumar M."/>
            <person name="Lance K."/>
            <person name="Landers T."/>
            <person name="Lara M."/>
            <person name="Lee W."/>
            <person name="Leger J.-P."/>
            <person name="Lennon N."/>
            <person name="Leuper L."/>
            <person name="LeVine S."/>
            <person name="Liu J."/>
            <person name="Liu X."/>
            <person name="Lokyitsang Y."/>
            <person name="Lokyitsang T."/>
            <person name="Lui A."/>
            <person name="Macdonald J."/>
            <person name="Major J."/>
            <person name="Marabella R."/>
            <person name="Maru K."/>
            <person name="Matthews C."/>
            <person name="McDonough S."/>
            <person name="Mehta T."/>
            <person name="Meldrim J."/>
            <person name="Melnikov A."/>
            <person name="Meneus L."/>
            <person name="Mihalev A."/>
            <person name="Mihova T."/>
            <person name="Miller K."/>
            <person name="Mittelman R."/>
            <person name="Mlenga V."/>
            <person name="Mulrain L."/>
            <person name="Munson G."/>
            <person name="Navidi A."/>
            <person name="Naylor J."/>
            <person name="Nguyen T."/>
            <person name="Nguyen N."/>
            <person name="Nguyen C."/>
            <person name="Nguyen T."/>
            <person name="Nicol R."/>
            <person name="Norbu N."/>
            <person name="Norbu C."/>
            <person name="Novod N."/>
            <person name="Nyima T."/>
            <person name="Olandt P."/>
            <person name="O'Neill B."/>
            <person name="O'Neill K."/>
            <person name="Osman S."/>
            <person name="Oyono L."/>
            <person name="Patti C."/>
            <person name="Perrin D."/>
            <person name="Phunkhang P."/>
            <person name="Pierre F."/>
            <person name="Priest M."/>
            <person name="Rachupka A."/>
            <person name="Raghuraman S."/>
            <person name="Rameau R."/>
            <person name="Ray V."/>
            <person name="Raymond C."/>
            <person name="Rege F."/>
            <person name="Rise C."/>
            <person name="Rogers J."/>
            <person name="Rogov P."/>
            <person name="Sahalie J."/>
            <person name="Settipalli S."/>
            <person name="Sharpe T."/>
            <person name="Shea T."/>
            <person name="Sheehan M."/>
            <person name="Sherpa N."/>
            <person name="Shi J."/>
            <person name="Shih D."/>
            <person name="Sloan J."/>
            <person name="Smith C."/>
            <person name="Sparrow T."/>
            <person name="Stalker J."/>
            <person name="Stange-Thomann N."/>
            <person name="Stavropoulos S."/>
            <person name="Stone C."/>
            <person name="Stone S."/>
            <person name="Sykes S."/>
            <person name="Tchuinga P."/>
            <person name="Tenzing P."/>
            <person name="Tesfaye S."/>
            <person name="Thoulutsang D."/>
            <person name="Thoulutsang Y."/>
            <person name="Topham K."/>
            <person name="Topping I."/>
            <person name="Tsamla T."/>
            <person name="Vassiliev H."/>
            <person name="Venkataraman V."/>
            <person name="Vo A."/>
            <person name="Wangchuk T."/>
            <person name="Wangdi T."/>
            <person name="Weiand M."/>
            <person name="Wilkinson J."/>
            <person name="Wilson A."/>
            <person name="Yadav S."/>
            <person name="Yang S."/>
            <person name="Yang X."/>
            <person name="Young G."/>
            <person name="Yu Q."/>
            <person name="Zainoun J."/>
            <person name="Zembek L."/>
            <person name="Zimmer A."/>
            <person name="Lander E.S."/>
        </authorList>
    </citation>
    <scope>NUCLEOTIDE SEQUENCE [LARGE SCALE GENOMIC DNA]</scope>
    <source>
        <strain>Boxer</strain>
    </source>
</reference>
<reference key="2">
    <citation type="journal article" date="2022" name="Nat. Commun.">
        <title>Tight junction channel regulation by interclaudin interference.</title>
        <authorList>
            <person name="Shashikanth N."/>
            <person name="France M.M."/>
            <person name="Xiao R."/>
            <person name="Haest X."/>
            <person name="Rizzo H.E."/>
            <person name="Yeste J."/>
            <person name="Reiner J."/>
            <person name="Turner J.R."/>
        </authorList>
    </citation>
    <scope>SUBCELLULAR LOCATION</scope>
    <scope>CAUTION</scope>
</reference>
<dbReference type="RefSeq" id="XP_005621019.1">
    <property type="nucleotide sequence ID" value="XM_005620962.4"/>
</dbReference>
<dbReference type="RefSeq" id="XP_038395023.1">
    <property type="nucleotide sequence ID" value="XM_038539095.1"/>
</dbReference>
<dbReference type="SMR" id="A0A8C0N7E5"/>
<dbReference type="Ensembl" id="ENSCAFT00030023699.1">
    <property type="protein sequence ID" value="ENSCAFP00030020648.1"/>
    <property type="gene ID" value="ENSCAFG00030012820.1"/>
</dbReference>
<dbReference type="Ensembl" id="ENSCAFT00805000525">
    <property type="protein sequence ID" value="ENSCAFP00805000382"/>
    <property type="gene ID" value="ENSCAFG00805000342"/>
</dbReference>
<dbReference type="GeneID" id="100856416"/>
<dbReference type="KEGG" id="cfa:100856416"/>
<dbReference type="CTD" id="1364"/>
<dbReference type="OMA" id="NCPPRAD"/>
<dbReference type="Proteomes" id="UP000002254">
    <property type="component" value="Chromosome 6"/>
</dbReference>
<dbReference type="Proteomes" id="UP000694429">
    <property type="component" value="Chromosome 6"/>
</dbReference>
<dbReference type="Proteomes" id="UP000694542">
    <property type="component" value="Unplaced"/>
</dbReference>
<dbReference type="Proteomes" id="UP000805418">
    <property type="component" value="Unplaced"/>
</dbReference>
<dbReference type="GO" id="GO:0005923">
    <property type="term" value="C:bicellular tight junction"/>
    <property type="evidence" value="ECO:0007669"/>
    <property type="project" value="UniProtKB-SubCell"/>
</dbReference>
<dbReference type="GO" id="GO:0034707">
    <property type="term" value="C:chloride channel complex"/>
    <property type="evidence" value="ECO:0007669"/>
    <property type="project" value="UniProtKB-KW"/>
</dbReference>
<dbReference type="GO" id="GO:0005886">
    <property type="term" value="C:plasma membrane"/>
    <property type="evidence" value="ECO:0007669"/>
    <property type="project" value="UniProtKB-SubCell"/>
</dbReference>
<dbReference type="GO" id="GO:0005254">
    <property type="term" value="F:chloride channel activity"/>
    <property type="evidence" value="ECO:0007669"/>
    <property type="project" value="UniProtKB-KW"/>
</dbReference>
<dbReference type="GO" id="GO:0005198">
    <property type="term" value="F:structural molecule activity"/>
    <property type="evidence" value="ECO:0007669"/>
    <property type="project" value="InterPro"/>
</dbReference>
<dbReference type="FunFam" id="1.20.140.150:FF:000001">
    <property type="entry name" value="Claudin"/>
    <property type="match status" value="1"/>
</dbReference>
<dbReference type="Gene3D" id="1.20.140.150">
    <property type="match status" value="1"/>
</dbReference>
<dbReference type="InterPro" id="IPR006187">
    <property type="entry name" value="Claudin"/>
</dbReference>
<dbReference type="InterPro" id="IPR003550">
    <property type="entry name" value="Claudin4"/>
</dbReference>
<dbReference type="InterPro" id="IPR017974">
    <property type="entry name" value="Claudin_CS"/>
</dbReference>
<dbReference type="InterPro" id="IPR004031">
    <property type="entry name" value="PMP22/EMP/MP20/Claudin"/>
</dbReference>
<dbReference type="PANTHER" id="PTHR12002">
    <property type="entry name" value="CLAUDIN"/>
    <property type="match status" value="1"/>
</dbReference>
<dbReference type="Pfam" id="PF00822">
    <property type="entry name" value="PMP22_Claudin"/>
    <property type="match status" value="1"/>
</dbReference>
<dbReference type="PRINTS" id="PR01077">
    <property type="entry name" value="CLAUDIN"/>
</dbReference>
<dbReference type="PRINTS" id="PR01379">
    <property type="entry name" value="CLAUDIN4"/>
</dbReference>
<dbReference type="PROSITE" id="PS01346">
    <property type="entry name" value="CLAUDIN"/>
    <property type="match status" value="1"/>
</dbReference>
<keyword id="KW-0965">Cell junction</keyword>
<keyword id="KW-1003">Cell membrane</keyword>
<keyword id="KW-0868">Chloride</keyword>
<keyword id="KW-0869">Chloride channel</keyword>
<keyword id="KW-1015">Disulfide bond</keyword>
<keyword id="KW-0407">Ion channel</keyword>
<keyword id="KW-0406">Ion transport</keyword>
<keyword id="KW-0472">Membrane</keyword>
<keyword id="KW-0597">Phosphoprotein</keyword>
<keyword id="KW-1185">Reference proteome</keyword>
<keyword id="KW-0796">Tight junction</keyword>
<keyword id="KW-0812">Transmembrane</keyword>
<keyword id="KW-1133">Transmembrane helix</keyword>
<keyword id="KW-0813">Transport</keyword>
<proteinExistence type="inferred from homology"/>
<protein>
    <recommendedName>
        <fullName>Claudin-4</fullName>
    </recommendedName>
</protein>
<feature type="chain" id="PRO_0000460671" description="Claudin-4">
    <location>
        <begin position="1"/>
        <end position="210"/>
    </location>
</feature>
<feature type="topological domain" description="Cytoplasmic" evidence="5">
    <location>
        <begin position="1"/>
        <end position="7"/>
    </location>
</feature>
<feature type="transmembrane region" description="Helical" evidence="3">
    <location>
        <begin position="8"/>
        <end position="28"/>
    </location>
</feature>
<feature type="topological domain" description="Extracellular" evidence="5">
    <location>
        <begin position="29"/>
        <end position="81"/>
    </location>
</feature>
<feature type="transmembrane region" description="Helical" evidence="3">
    <location>
        <begin position="82"/>
        <end position="102"/>
    </location>
</feature>
<feature type="topological domain" description="Cytoplasmic" evidence="5">
    <location>
        <begin position="103"/>
        <end position="117"/>
    </location>
</feature>
<feature type="transmembrane region" description="Helical" evidence="3">
    <location>
        <begin position="118"/>
        <end position="138"/>
    </location>
</feature>
<feature type="topological domain" description="Extracellular" evidence="5">
    <location>
        <begin position="139"/>
        <end position="160"/>
    </location>
</feature>
<feature type="transmembrane region" description="Helical" evidence="3">
    <location>
        <begin position="161"/>
        <end position="181"/>
    </location>
</feature>
<feature type="topological domain" description="Cytoplasmic" evidence="5">
    <location>
        <begin position="182"/>
        <end position="210"/>
    </location>
</feature>
<feature type="region of interest" description="Interaction with EPHA2" evidence="1">
    <location>
        <begin position="1"/>
        <end position="103"/>
    </location>
</feature>
<feature type="region of interest" description="Interactions with TJP1, TJP2 and TJP3" evidence="2">
    <location>
        <begin position="209"/>
        <end position="210"/>
    </location>
</feature>
<feature type="modified residue" description="Phosphotyrosine" evidence="1">
    <location>
        <position position="209"/>
    </location>
</feature>
<feature type="disulfide bond" evidence="1">
    <location>
        <begin position="54"/>
        <end position="64"/>
    </location>
</feature>